<sequence length="282" mass="31967">MSPKTVFSTDTHREPIPPQPHPSGARPPQLPRELIPRHVAIVMDGNGRWAKQRGLPRTEGHKAGESSLFDVIEGALELGVPYLSAYAFSTENWKRSPDEVRFLMGFNRDVIRRRRDELHARGVRVRWAGRPGRLWKSVIKELTEAEELTKHNTKLTLQFCVNYGGRAEIADAAAALARDVAAGRLSPNRVTEATLARYLYHPDIPDVDLFIRSSGEQRLSNFLLWQSSYAEFVFLDTLWPDFDRRHFWQACEIYARRDRRYGGAEPNPVGPPQSAAGAQGQD</sequence>
<reference key="1">
    <citation type="journal article" date="2007" name="J. Bacteriol.">
        <title>Genome sequence and analysis of the soil cellulolytic actinomycete Thermobifida fusca YX.</title>
        <authorList>
            <person name="Lykidis A."/>
            <person name="Mavromatis K."/>
            <person name="Ivanova N."/>
            <person name="Anderson I."/>
            <person name="Land M."/>
            <person name="DiBartolo G."/>
            <person name="Martinez M."/>
            <person name="Lapidus A."/>
            <person name="Lucas S."/>
            <person name="Copeland A."/>
            <person name="Richardson P."/>
            <person name="Wilson D.B."/>
            <person name="Kyrpides N."/>
        </authorList>
    </citation>
    <scope>NUCLEOTIDE SEQUENCE [LARGE SCALE GENOMIC DNA]</scope>
    <source>
        <strain>YX</strain>
    </source>
</reference>
<reference key="2">
    <citation type="journal article" date="2009" name="J. Biosci. Bioeng.">
        <title>Cloning and functional analysis of cis-prenyltransferase from Thermobifida fusca.</title>
        <authorList>
            <person name="Ambo T."/>
            <person name="Noike M."/>
            <person name="Kurokawa H."/>
            <person name="Koyama T."/>
        </authorList>
    </citation>
    <scope>FUNCTION AS A DODECAPRENYL DIPHOSPHATE SYNTHASE</scope>
    <scope>CATALYTIC ACTIVITY</scope>
    <scope>SUBSTRATE SPECIFICITY</scope>
</reference>
<organism>
    <name type="scientific">Thermobifida fusca (strain YX)</name>
    <dbReference type="NCBI Taxonomy" id="269800"/>
    <lineage>
        <taxon>Bacteria</taxon>
        <taxon>Bacillati</taxon>
        <taxon>Actinomycetota</taxon>
        <taxon>Actinomycetes</taxon>
        <taxon>Streptosporangiales</taxon>
        <taxon>Nocardiopsidaceae</taxon>
        <taxon>Thermobifida</taxon>
    </lineage>
</organism>
<name>DPDP_THEFY</name>
<dbReference type="EC" id="2.5.1.88"/>
<dbReference type="EMBL" id="CP000088">
    <property type="protein sequence ID" value="AAZ54891.1"/>
    <property type="molecule type" value="Genomic_DNA"/>
</dbReference>
<dbReference type="RefSeq" id="WP_011291300.1">
    <property type="nucleotide sequence ID" value="NC_007333.1"/>
</dbReference>
<dbReference type="PDB" id="7CPM">
    <property type="method" value="X-ray"/>
    <property type="resolution" value="2.60 A"/>
    <property type="chains" value="A/B/C/D/E/F=1-282"/>
</dbReference>
<dbReference type="PDB" id="7CPN">
    <property type="method" value="X-ray"/>
    <property type="resolution" value="2.28 A"/>
    <property type="chains" value="A/B/C/D/E/F=1-282"/>
</dbReference>
<dbReference type="PDBsum" id="7CPM"/>
<dbReference type="PDBsum" id="7CPN"/>
<dbReference type="SMR" id="Q47RM6"/>
<dbReference type="STRING" id="269800.Tfu_0853"/>
<dbReference type="KEGG" id="tfu:Tfu_0853"/>
<dbReference type="eggNOG" id="COG0020">
    <property type="taxonomic scope" value="Bacteria"/>
</dbReference>
<dbReference type="HOGENOM" id="CLU_038505_1_2_11"/>
<dbReference type="OrthoDB" id="4191603at2"/>
<dbReference type="BioCyc" id="MetaCyc:MONOMER-15682"/>
<dbReference type="GO" id="GO:0005829">
    <property type="term" value="C:cytosol"/>
    <property type="evidence" value="ECO:0007669"/>
    <property type="project" value="TreeGrafter"/>
</dbReference>
<dbReference type="GO" id="GO:0005886">
    <property type="term" value="C:plasma membrane"/>
    <property type="evidence" value="ECO:0007669"/>
    <property type="project" value="TreeGrafter"/>
</dbReference>
<dbReference type="GO" id="GO:0008834">
    <property type="term" value="F:ditrans,polycis-undecaprenyl-diphosphate synthase [(2E,6E)-farnesyl-diphosphate specific] activity"/>
    <property type="evidence" value="ECO:0007669"/>
    <property type="project" value="TreeGrafter"/>
</dbReference>
<dbReference type="GO" id="GO:0000287">
    <property type="term" value="F:magnesium ion binding"/>
    <property type="evidence" value="ECO:0007669"/>
    <property type="project" value="UniProtKB-UniRule"/>
</dbReference>
<dbReference type="GO" id="GO:0030145">
    <property type="term" value="F:manganese ion binding"/>
    <property type="evidence" value="ECO:0007669"/>
    <property type="project" value="TreeGrafter"/>
</dbReference>
<dbReference type="GO" id="GO:0004659">
    <property type="term" value="F:prenyltransferase activity"/>
    <property type="evidence" value="ECO:0000314"/>
    <property type="project" value="UniProtKB"/>
</dbReference>
<dbReference type="GO" id="GO:0033850">
    <property type="term" value="F:Z-farnesyl diphosphate synthase activity"/>
    <property type="evidence" value="ECO:0007669"/>
    <property type="project" value="TreeGrafter"/>
</dbReference>
<dbReference type="GO" id="GO:0016094">
    <property type="term" value="P:polyprenol biosynthetic process"/>
    <property type="evidence" value="ECO:0007669"/>
    <property type="project" value="TreeGrafter"/>
</dbReference>
<dbReference type="CDD" id="cd00475">
    <property type="entry name" value="Cis_IPPS"/>
    <property type="match status" value="1"/>
</dbReference>
<dbReference type="FunFam" id="3.40.1180.10:FF:000001">
    <property type="entry name" value="(2E,6E)-farnesyl-diphosphate-specific ditrans,polycis-undecaprenyl-diphosphate synthase"/>
    <property type="match status" value="1"/>
</dbReference>
<dbReference type="Gene3D" id="3.40.1180.10">
    <property type="entry name" value="Decaprenyl diphosphate synthase-like"/>
    <property type="match status" value="1"/>
</dbReference>
<dbReference type="HAMAP" id="MF_01139">
    <property type="entry name" value="ISPT"/>
    <property type="match status" value="1"/>
</dbReference>
<dbReference type="InterPro" id="IPR001441">
    <property type="entry name" value="UPP_synth-like"/>
</dbReference>
<dbReference type="InterPro" id="IPR018520">
    <property type="entry name" value="UPP_synth-like_CS"/>
</dbReference>
<dbReference type="InterPro" id="IPR036424">
    <property type="entry name" value="UPP_synth-like_sf"/>
</dbReference>
<dbReference type="NCBIfam" id="NF011404">
    <property type="entry name" value="PRK14829.1"/>
    <property type="match status" value="1"/>
</dbReference>
<dbReference type="NCBIfam" id="TIGR00055">
    <property type="entry name" value="uppS"/>
    <property type="match status" value="1"/>
</dbReference>
<dbReference type="PANTHER" id="PTHR10291:SF0">
    <property type="entry name" value="DEHYDRODOLICHYL DIPHOSPHATE SYNTHASE 2"/>
    <property type="match status" value="1"/>
</dbReference>
<dbReference type="PANTHER" id="PTHR10291">
    <property type="entry name" value="DEHYDRODOLICHYL DIPHOSPHATE SYNTHASE FAMILY MEMBER"/>
    <property type="match status" value="1"/>
</dbReference>
<dbReference type="Pfam" id="PF01255">
    <property type="entry name" value="Prenyltransf"/>
    <property type="match status" value="1"/>
</dbReference>
<dbReference type="SUPFAM" id="SSF64005">
    <property type="entry name" value="Undecaprenyl diphosphate synthase"/>
    <property type="match status" value="1"/>
</dbReference>
<dbReference type="PROSITE" id="PS01066">
    <property type="entry name" value="UPP_SYNTHASE"/>
    <property type="match status" value="1"/>
</dbReference>
<proteinExistence type="evidence at protein level"/>
<evidence type="ECO:0000250" key="1"/>
<evidence type="ECO:0000256" key="2">
    <source>
        <dbReference type="SAM" id="MobiDB-lite"/>
    </source>
</evidence>
<evidence type="ECO:0000269" key="3">
    <source>
    </source>
</evidence>
<evidence type="ECO:0000305" key="4"/>
<evidence type="ECO:0007829" key="5">
    <source>
        <dbReference type="PDB" id="7CPN"/>
    </source>
</evidence>
<comment type="function">
    <text evidence="3">Catalyzes the synthesis of Z,E-mixed prenyl diphosphates by a condensation of isopentenyl diphosphate to an allylic diphosphate. It shows a large substrate specificity accepting dimethylallyl diphosphate (DMAPP), GPP, E,Efarnesyl diphosphate (FPP), E,E,E-geranylgeranyl diphosphate (GGPP), neryl diphosphate (Z-GPP), and (2Z,6E)-farnesyl diphosphate (Z,E-FPP) as allylic substrates. The enzyme exhibits the highest activity when Z,E-FPP is employed as an allylic substrate. The major product is dodecaprenyl diphosphate (C60) under every allylic substrate conditions, but the enzyme is also able to synthesize even C70 prenyl diphosphate as the maximum chain-length product.</text>
</comment>
<comment type="catalytic activity">
    <reaction evidence="3">
        <text>(2Z,6E)-farnesyl diphosphate + 10 isopentenyl diphosphate = di-trans,deca-cis-tridecaprenyl diphosphate + 10 diphosphate</text>
        <dbReference type="Rhea" id="RHEA:27614"/>
        <dbReference type="ChEBI" id="CHEBI:33019"/>
        <dbReference type="ChEBI" id="CHEBI:60385"/>
        <dbReference type="ChEBI" id="CHEBI:128769"/>
        <dbReference type="ChEBI" id="CHEBI:162247"/>
        <dbReference type="EC" id="2.5.1.88"/>
    </reaction>
</comment>
<comment type="catalytic activity">
    <reaction evidence="3">
        <text>(2Z,6E)-farnesyl diphosphate + 11 isopentenyl diphosphate = di-trans,undeca-cis-tetradecaprenyl diphosphate + 11 diphosphate</text>
        <dbReference type="Rhea" id="RHEA:27618"/>
        <dbReference type="ChEBI" id="CHEBI:33019"/>
        <dbReference type="ChEBI" id="CHEBI:60387"/>
        <dbReference type="ChEBI" id="CHEBI:128769"/>
        <dbReference type="ChEBI" id="CHEBI:162247"/>
        <dbReference type="EC" id="2.5.1.88"/>
    </reaction>
</comment>
<comment type="catalytic activity">
    <reaction evidence="3">
        <text>(2Z,6E)-farnesyl diphosphate + 9 isopentenyl diphosphate = di-trans,nona-cis-dodecaprenyl diphosphate + 9 diphosphate</text>
        <dbReference type="Rhea" id="RHEA:27602"/>
        <dbReference type="ChEBI" id="CHEBI:33019"/>
        <dbReference type="ChEBI" id="CHEBI:60386"/>
        <dbReference type="ChEBI" id="CHEBI:128769"/>
        <dbReference type="ChEBI" id="CHEBI:162247"/>
        <dbReference type="EC" id="2.5.1.88"/>
    </reaction>
</comment>
<comment type="cofactor">
    <cofactor evidence="1">
        <name>Mg(2+)</name>
        <dbReference type="ChEBI" id="CHEBI:18420"/>
    </cofactor>
    <text evidence="1">Binds 2 magnesium ions per subunit.</text>
</comment>
<comment type="subunit">
    <text evidence="1">Homodimer.</text>
</comment>
<comment type="similarity">
    <text evidence="4">Belongs to the UPP synthase family.</text>
</comment>
<protein>
    <recommendedName>
        <fullName>Trans,polycis-polyprenyl diphosphate synthase ((2Z,6E)-farnesyl diphosphate specific)</fullName>
        <ecNumber>2.5.1.88</ecNumber>
    </recommendedName>
    <alternativeName>
        <fullName>Cis-prenyltransferase</fullName>
    </alternativeName>
    <alternativeName>
        <fullName>Dodecaprenyl diphosphate synthase</fullName>
    </alternativeName>
</protein>
<gene>
    <name type="ordered locus">Tfu_0853</name>
</gene>
<feature type="chain" id="PRO_0000419134" description="Trans,polycis-polyprenyl diphosphate synthase ((2Z,6E)-farnesyl diphosphate specific)">
    <location>
        <begin position="1"/>
        <end position="282"/>
    </location>
</feature>
<feature type="region of interest" description="Disordered" evidence="2">
    <location>
        <begin position="1"/>
        <end position="30"/>
    </location>
</feature>
<feature type="region of interest" description="Disordered" evidence="2">
    <location>
        <begin position="262"/>
        <end position="282"/>
    </location>
</feature>
<feature type="active site" evidence="1">
    <location>
        <position position="44"/>
    </location>
</feature>
<feature type="active site" description="Proton acceptor" evidence="1">
    <location>
        <position position="92"/>
    </location>
</feature>
<feature type="binding site" evidence="1">
    <location>
        <position position="44"/>
    </location>
    <ligand>
        <name>Mg(2+)</name>
        <dbReference type="ChEBI" id="CHEBI:18420"/>
    </ligand>
</feature>
<feature type="binding site" evidence="1">
    <location>
        <begin position="45"/>
        <end position="48"/>
    </location>
    <ligand>
        <name>substrate</name>
    </ligand>
</feature>
<feature type="binding site" evidence="1">
    <location>
        <position position="49"/>
    </location>
    <ligand>
        <name>substrate</name>
    </ligand>
</feature>
<feature type="binding site" evidence="1">
    <location>
        <position position="57"/>
    </location>
    <ligand>
        <name>substrate</name>
    </ligand>
</feature>
<feature type="binding site" evidence="1">
    <location>
        <position position="61"/>
    </location>
    <ligand>
        <name>substrate</name>
    </ligand>
</feature>
<feature type="binding site" evidence="1">
    <location>
        <begin position="89"/>
        <end position="91"/>
    </location>
    <ligand>
        <name>substrate</name>
    </ligand>
</feature>
<feature type="binding site" evidence="1">
    <location>
        <position position="93"/>
    </location>
    <ligand>
        <name>substrate</name>
    </ligand>
</feature>
<feature type="binding site" evidence="1">
    <location>
        <position position="95"/>
    </location>
    <ligand>
        <name>substrate</name>
    </ligand>
</feature>
<feature type="binding site" evidence="1">
    <location>
        <position position="212"/>
    </location>
    <ligand>
        <name>substrate</name>
    </ligand>
</feature>
<feature type="binding site" evidence="1">
    <location>
        <begin position="218"/>
        <end position="220"/>
    </location>
    <ligand>
        <name>substrate</name>
    </ligand>
</feature>
<feature type="binding site" evidence="1">
    <location>
        <position position="231"/>
    </location>
    <ligand>
        <name>Mg(2+)</name>
        <dbReference type="ChEBI" id="CHEBI:18420"/>
    </ligand>
</feature>
<feature type="helix" evidence="5">
    <location>
        <begin position="32"/>
        <end position="34"/>
    </location>
</feature>
<feature type="strand" evidence="5">
    <location>
        <begin position="37"/>
        <end position="42"/>
    </location>
</feature>
<feature type="helix" evidence="5">
    <location>
        <begin position="46"/>
        <end position="51"/>
    </location>
</feature>
<feature type="turn" evidence="5">
    <location>
        <begin position="52"/>
        <end position="54"/>
    </location>
</feature>
<feature type="helix" evidence="5">
    <location>
        <begin position="57"/>
        <end position="78"/>
    </location>
</feature>
<feature type="strand" evidence="5">
    <location>
        <begin position="82"/>
        <end position="90"/>
    </location>
</feature>
<feature type="helix" evidence="5">
    <location>
        <begin position="97"/>
        <end position="121"/>
    </location>
</feature>
<feature type="strand" evidence="5">
    <location>
        <begin position="123"/>
        <end position="129"/>
    </location>
</feature>
<feature type="helix" evidence="5">
    <location>
        <begin position="136"/>
        <end position="149"/>
    </location>
</feature>
<feature type="strand" evidence="5">
    <location>
        <begin position="154"/>
        <end position="163"/>
    </location>
</feature>
<feature type="helix" evidence="5">
    <location>
        <begin position="165"/>
        <end position="181"/>
    </location>
</feature>
<feature type="helix" evidence="5">
    <location>
        <begin position="187"/>
        <end position="189"/>
    </location>
</feature>
<feature type="helix" evidence="5">
    <location>
        <begin position="192"/>
        <end position="196"/>
    </location>
</feature>
<feature type="strand" evidence="5">
    <location>
        <begin position="208"/>
        <end position="215"/>
    </location>
</feature>
<feature type="helix" evidence="5">
    <location>
        <begin position="225"/>
        <end position="227"/>
    </location>
</feature>
<feature type="strand" evidence="5">
    <location>
        <begin position="231"/>
        <end position="234"/>
    </location>
</feature>
<feature type="helix" evidence="5">
    <location>
        <begin position="239"/>
        <end position="241"/>
    </location>
</feature>
<feature type="helix" evidence="5">
    <location>
        <begin position="244"/>
        <end position="255"/>
    </location>
</feature>
<accession>Q47RM6</accession>
<keyword id="KW-0002">3D-structure</keyword>
<keyword id="KW-0460">Magnesium</keyword>
<keyword id="KW-0479">Metal-binding</keyword>
<keyword id="KW-0808">Transferase</keyword>